<protein>
    <recommendedName>
        <fullName>Dynamin-3</fullName>
        <ecNumber>3.6.5.5</ecNumber>
    </recommendedName>
    <alternativeName>
        <fullName>Dynamin, testicular</fullName>
    </alternativeName>
    <alternativeName>
        <fullName>T-dynamin</fullName>
    </alternativeName>
</protein>
<comment type="function">
    <text>Microtubule-associated force-producing protein involved in producing microtubule bundles and able to bind and hydrolyze GTP. Most probably involved in vesicular trafficking processes, in particular endocytosis.</text>
</comment>
<comment type="catalytic activity">
    <reaction>
        <text>GTP + H2O = GDP + phosphate + H(+)</text>
        <dbReference type="Rhea" id="RHEA:19669"/>
        <dbReference type="ChEBI" id="CHEBI:15377"/>
        <dbReference type="ChEBI" id="CHEBI:15378"/>
        <dbReference type="ChEBI" id="CHEBI:37565"/>
        <dbReference type="ChEBI" id="CHEBI:43474"/>
        <dbReference type="ChEBI" id="CHEBI:58189"/>
        <dbReference type="EC" id="3.6.5.5"/>
    </reaction>
</comment>
<comment type="subcellular location">
    <subcellularLocation>
        <location evidence="12">Cytoplasm</location>
    </subcellularLocation>
    <subcellularLocation>
        <location evidence="12">Cytoplasm</location>
        <location evidence="12">Cytoskeleton</location>
    </subcellularLocation>
    <text evidence="12">Microtubule-associated. Isoform-specific localization.</text>
</comment>
<comment type="subcellular location">
    <molecule>Isoform 2</molecule>
    <subcellularLocation>
        <location evidence="12">Cytoplasmic vesicle</location>
    </subcellularLocation>
</comment>
<comment type="subcellular location">
    <molecule>Isoform 8</molecule>
    <subcellularLocation>
        <location>Cytoplasm</location>
    </subcellularLocation>
    <subcellularLocation>
        <location evidence="12">Golgi apparatus</location>
    </subcellularLocation>
</comment>
<comment type="alternative products">
    <event type="alternative splicing"/>
    <isoform>
        <id>Q08877-1</id>
        <name>1</name>
        <name>bab</name>
        <name>DynIIIbb</name>
        <sequence type="displayed"/>
    </isoform>
    <isoform>
        <id>Q08877-2</id>
        <name>2</name>
        <name>baa</name>
        <name>DynIIIba</name>
        <sequence type="described" ref="VSP_034043"/>
    </isoform>
    <isoform>
        <id>Q08877-3</id>
        <name>3</name>
        <name>bbb</name>
        <sequence type="described" ref="VSP_034041"/>
    </isoform>
    <isoform>
        <id>Q08877-4</id>
        <name>4</name>
        <name>bba</name>
        <sequence type="described" ref="VSP_034041 VSP_034043"/>
    </isoform>
    <isoform>
        <id>Q08877-5</id>
        <name>5</name>
        <name>bcb</name>
        <sequence type="described" ref="VSP_034042"/>
    </isoform>
    <isoform>
        <id>Q08877-6</id>
        <name>6</name>
        <name>bca</name>
        <sequence type="described" ref="VSP_034042 VSP_034043"/>
    </isoform>
    <isoform>
        <id>Q08877-7</id>
        <name>7</name>
        <name>aab</name>
        <name>DynIIIab</name>
        <sequence type="described" ref="VSP_034038"/>
    </isoform>
    <isoform>
        <id>Q08877-9</id>
        <name>8</name>
        <name>aaa</name>
        <name>DynIIIaa</name>
        <sequence type="described" ref="VSP_034038 VSP_034043"/>
    </isoform>
    <isoform>
        <id>Q08877-10</id>
        <name>9</name>
        <name>abb</name>
        <sequence type="described" ref="VSP_034038 VSP_034041"/>
    </isoform>
    <isoform>
        <id>Q08877-11</id>
        <name>10</name>
        <name>aba</name>
        <sequence type="described" ref="VSP_034038 VSP_034041 VSP_034043"/>
    </isoform>
    <isoform>
        <id>Q08877-12</id>
        <name>11</name>
        <name>acb</name>
        <sequence type="described" ref="VSP_034038 VSP_034042"/>
    </isoform>
    <isoform>
        <id>Q08877-13</id>
        <name>12</name>
        <name>aca</name>
        <sequence type="described" ref="VSP_034038 VSP_034042 VSP_034043"/>
    </isoform>
    <isoform>
        <id>Q08877-8</id>
        <name>13</name>
        <name>c</name>
        <sequence type="described" ref="VSP_034039 VSP_034040"/>
    </isoform>
</comment>
<comment type="tissue specificity">
    <text evidence="10 12">Isoform-specific expression in germ-cell-depleted testis (Sertoli cells), brain (peripheral sensory neurons), lung and heart.</text>
</comment>
<comment type="developmental stage">
    <text evidence="11">Up-regulated expression throughout development.</text>
</comment>
<comment type="miscellaneous">
    <molecule>Isoform 1</molecule>
    <text>Expressed in lung, brain, heart.</text>
</comment>
<comment type="miscellaneous">
    <molecule>Isoform 2</molecule>
    <text evidence="14">Expressed in lung, brain, heart, testis. Localized to vesicular-like punctate spots, neither at the plasma membrane nor the Golgi area.</text>
</comment>
<comment type="miscellaneous">
    <molecule>Isoform 3</molecule>
    <text evidence="14">Expressed in lung, brain, heart, testis.</text>
</comment>
<comment type="miscellaneous">
    <molecule>Isoform 4</molecule>
    <text evidence="14">Expressed in lung, brain, heart.</text>
</comment>
<comment type="miscellaneous">
    <molecule>Isoform 5</molecule>
    <text evidence="14">Expressed in lung.</text>
</comment>
<comment type="miscellaneous">
    <molecule>Isoform 6</molecule>
    <text evidence="14">Expressed in lung.</text>
</comment>
<comment type="miscellaneous">
    <molecule>Isoform 7</molecule>
    <text evidence="14">Expressed in lung, brain, heart, testis.</text>
</comment>
<comment type="miscellaneous">
    <molecule>Isoform 8</molecule>
    <text evidence="14">Expressed in lung, brain, heart, testis. Diffuse cytoplasmic distribution and some modest association with the Golgi apparatus.</text>
</comment>
<comment type="miscellaneous">
    <molecule>Isoform 9</molecule>
    <text evidence="14">Expressed in lung, brain, heart.</text>
</comment>
<comment type="miscellaneous">
    <molecule>Isoform 10</molecule>
    <text evidence="14">Expressed in lung, brain, heart.</text>
</comment>
<comment type="miscellaneous">
    <molecule>Isoform 11</molecule>
    <text evidence="14">Expressed in lung.</text>
</comment>
<comment type="miscellaneous">
    <molecule>Isoform 12</molecule>
    <text evidence="14">Expressed in lung.</text>
</comment>
<comment type="miscellaneous">
    <molecule>Isoform 13</molecule>
    <text evidence="14">Expressed in lung, brain, heart, testis.</text>
</comment>
<comment type="similarity">
    <text evidence="7">Belongs to the TRAFAC class dynamin-like GTPase superfamily. Dynamin/Fzo/YdjA family.</text>
</comment>
<sequence>MGNREMEELIPLVNRLQDAFSALGQSCLLELPQIAVVGGQSAGKSSVLENFVGRDFLPRGSGIVTRRPLVLQLVTSKAEYAEFLHCKGKKFTDFDEVRHEIEAETDRVTGMNKGISSVPINLRVYSPHVLNLTLIDLPGITKVPVGDQPPDIEYQIRDMIMQFITRENCLILAVTPANTDLANSDALKLAKEVDPQGLRTIGVITKLDLMDEGTDARDVLENKLLPLRRGYVGVVNRSQKDIDGKKDIKAAMLAERKFFLSHPAYRHIADRMGTPHLQKVLNQQLTNHIRDTLPNFRNKLQGQLLSIEHEVEAFKNFKPEDPTRKTKALLQMVQQFAVDFEKRIEGSGDQVDTLELSGGAKINRIFHERFPFEIVKMEFNEKELRREISYAIKNIHGIRTGLFTPDMAFEAIVKKQIVKLKGPSLKSVDLVMQELINTVKKCTKRLANFPRLCEETERIVANHIREREGKTKDQVLLLIDIQVSYINTNHEDFIGFANAQQRSSQVHKKSTIGNQGTNLPPSRQIVIRKGWLTVSNIGIMKGGSKGYWFVLTAESLSWYKDDEEKEKKYMLPLDNLKVRDVEKGFMSSKHVFALFNTEQRNVYKDYRSLELACDSQEDVDSWKASLLRAGVYPDKSFTENDENGQAENFSMDPQLERQVETIRNLVDSYMSIINKCIRDLIPKTIMHLMINNVKDFINSELLAQLYSSEDQNTLMEESVEQAQRRDEMLRMYQALKEALAIIGDINTVTVSTPAPPPVDDSWLQHSRRSPPPSPTTQRRLTLSAPLPRPASSRGPAPAIPSPGPHSGAPPVPFRPGPLPPFPNSSDSYGAPPQVPSRPTRAPPSVPSRRPPPSPTRPTIIRPLESSLLD</sequence>
<name>DYN3_RAT</name>
<accession>Q08877</accession>
<accession>Q9QXL9</accession>
<evidence type="ECO:0000250" key="1">
    <source>
        <dbReference type="UniProtKB" id="P39052"/>
    </source>
</evidence>
<evidence type="ECO:0000250" key="2">
    <source>
        <dbReference type="UniProtKB" id="P39054"/>
    </source>
</evidence>
<evidence type="ECO:0000250" key="3">
    <source>
        <dbReference type="UniProtKB" id="P50570"/>
    </source>
</evidence>
<evidence type="ECO:0000250" key="4">
    <source>
        <dbReference type="UniProtKB" id="Q9UQ16"/>
    </source>
</evidence>
<evidence type="ECO:0000255" key="5">
    <source>
        <dbReference type="PROSITE-ProRule" id="PRU00145"/>
    </source>
</evidence>
<evidence type="ECO:0000255" key="6">
    <source>
        <dbReference type="PROSITE-ProRule" id="PRU00720"/>
    </source>
</evidence>
<evidence type="ECO:0000255" key="7">
    <source>
        <dbReference type="PROSITE-ProRule" id="PRU01055"/>
    </source>
</evidence>
<evidence type="ECO:0000256" key="8">
    <source>
        <dbReference type="SAM" id="MobiDB-lite"/>
    </source>
</evidence>
<evidence type="ECO:0000269" key="9">
    <source>
    </source>
</evidence>
<evidence type="ECO:0000269" key="10">
    <source>
    </source>
</evidence>
<evidence type="ECO:0000269" key="11">
    <source>
    </source>
</evidence>
<evidence type="ECO:0000269" key="12">
    <source>
    </source>
</evidence>
<evidence type="ECO:0000303" key="13">
    <source>
    </source>
</evidence>
<evidence type="ECO:0000305" key="14"/>
<evidence type="ECO:0007744" key="15">
    <source>
    </source>
</evidence>
<gene>
    <name type="primary">Dnm3</name>
    <name type="synonym">Dyn3</name>
</gene>
<proteinExistence type="evidence at protein level"/>
<reference key="1">
    <citation type="journal article" date="1993" name="J. Cell Sci.">
        <title>A novel member of the dynamin family of GTP-binding proteins is expressed specifically in the testis.</title>
        <authorList>
            <person name="Nakata T."/>
            <person name="Takamura R."/>
            <person name="Hirokawa N."/>
        </authorList>
    </citation>
    <scope>NUCLEOTIDE SEQUENCE [MRNA] (ISOFORM 8)</scope>
    <scope>TISSUE SPECIFICITY</scope>
    <source>
        <tissue>Testis</tissue>
    </source>
</reference>
<reference key="2">
    <citation type="journal article" date="1996" name="J. Neurochem.">
        <title>Three dynamin-encoding genes are differentially expressed in developing rat brain.</title>
        <authorList>
            <person name="Cook T."/>
            <person name="Mesa K."/>
            <person name="Urrutia R."/>
        </authorList>
    </citation>
    <scope>NUCLEOTIDE SEQUENCE [MRNA] (ISOFORM 1)</scope>
    <scope>DEVELOPMENTAL STAGE</scope>
    <source>
        <tissue>Brain</tissue>
    </source>
</reference>
<reference key="3">
    <citation type="journal article" date="2007" name="J. Biol. Chem.">
        <title>The in vivo phosphorylation sites of rat brain dynamin I.</title>
        <authorList>
            <person name="Graham M.E."/>
            <person name="Anggono V."/>
            <person name="Bache N."/>
            <person name="Larsen M.R."/>
            <person name="Craft G.E."/>
            <person name="Robinson P.J."/>
        </authorList>
    </citation>
    <scope>PROTEIN SEQUENCE OF 839-859 (ISOFORM 1/3/5/7/9/11)</scope>
    <scope>PHOSPHORYLATION AT SER-769; SER-773 AND SER-853</scope>
    <scope>IDENTIFICATION BY MASS SPECTROMETRY</scope>
</reference>
<reference key="4">
    <citation type="journal article" date="1998" name="Mol. Biol. Cell">
        <title>Differential distribution of dynamin isoforms in mammalian cells.</title>
        <authorList>
            <person name="Cao H."/>
            <person name="Garcia F."/>
            <person name="McNiven M.A."/>
        </authorList>
    </citation>
    <scope>ALTERNATIVE SPLICING</scope>
    <scope>SUBCELLULAR LOCATION</scope>
    <scope>TISSUE SPECIFICITY</scope>
</reference>
<reference key="5">
    <citation type="journal article" date="2012" name="Nat. Commun.">
        <title>Quantitative maps of protein phosphorylation sites across 14 different rat organs and tissues.</title>
        <authorList>
            <person name="Lundby A."/>
            <person name="Secher A."/>
            <person name="Lage K."/>
            <person name="Nordsborg N.B."/>
            <person name="Dmytriyev A."/>
            <person name="Lundby C."/>
            <person name="Olsen J.V."/>
        </authorList>
    </citation>
    <scope>PHOSPHORYLATION [LARGE SCALE ANALYSIS] AT SER-769 AND SER-773</scope>
    <scope>IDENTIFICATION BY MASS SPECTROMETRY [LARGE SCALE ANALYSIS]</scope>
</reference>
<keyword id="KW-0007">Acetylation</keyword>
<keyword id="KW-0025">Alternative splicing</keyword>
<keyword id="KW-0963">Cytoplasm</keyword>
<keyword id="KW-0968">Cytoplasmic vesicle</keyword>
<keyword id="KW-0206">Cytoskeleton</keyword>
<keyword id="KW-0903">Direct protein sequencing</keyword>
<keyword id="KW-0254">Endocytosis</keyword>
<keyword id="KW-0333">Golgi apparatus</keyword>
<keyword id="KW-0342">GTP-binding</keyword>
<keyword id="KW-0378">Hydrolase</keyword>
<keyword id="KW-0493">Microtubule</keyword>
<keyword id="KW-0505">Motor protein</keyword>
<keyword id="KW-0547">Nucleotide-binding</keyword>
<keyword id="KW-0597">Phosphoprotein</keyword>
<keyword id="KW-1185">Reference proteome</keyword>
<organism>
    <name type="scientific">Rattus norvegicus</name>
    <name type="common">Rat</name>
    <dbReference type="NCBI Taxonomy" id="10116"/>
    <lineage>
        <taxon>Eukaryota</taxon>
        <taxon>Metazoa</taxon>
        <taxon>Chordata</taxon>
        <taxon>Craniata</taxon>
        <taxon>Vertebrata</taxon>
        <taxon>Euteleostomi</taxon>
        <taxon>Mammalia</taxon>
        <taxon>Eutheria</taxon>
        <taxon>Euarchontoglires</taxon>
        <taxon>Glires</taxon>
        <taxon>Rodentia</taxon>
        <taxon>Myomorpha</taxon>
        <taxon>Muroidea</taxon>
        <taxon>Muridae</taxon>
        <taxon>Murinae</taxon>
        <taxon>Rattus</taxon>
    </lineage>
</organism>
<feature type="chain" id="PRO_0000206574" description="Dynamin-3">
    <location>
        <begin position="1"/>
        <end position="869"/>
    </location>
</feature>
<feature type="domain" description="Dynamin-type G" evidence="7">
    <location>
        <begin position="28"/>
        <end position="294"/>
    </location>
</feature>
<feature type="domain" description="PH" evidence="5">
    <location>
        <begin position="525"/>
        <end position="631"/>
    </location>
</feature>
<feature type="domain" description="GED" evidence="6">
    <location>
        <begin position="659"/>
        <end position="750"/>
    </location>
</feature>
<feature type="region of interest" description="G1 motif" evidence="7">
    <location>
        <begin position="38"/>
        <end position="45"/>
    </location>
</feature>
<feature type="region of interest" description="G2 motif" evidence="7">
    <location>
        <begin position="64"/>
        <end position="66"/>
    </location>
</feature>
<feature type="region of interest" description="G3 motif" evidence="7">
    <location>
        <begin position="136"/>
        <end position="139"/>
    </location>
</feature>
<feature type="region of interest" description="G4 motif" evidence="7">
    <location>
        <begin position="205"/>
        <end position="208"/>
    </location>
</feature>
<feature type="region of interest" description="G5 motif" evidence="7">
    <location>
        <begin position="235"/>
        <end position="238"/>
    </location>
</feature>
<feature type="region of interest" description="Disordered" evidence="8">
    <location>
        <begin position="752"/>
        <end position="869"/>
    </location>
</feature>
<feature type="compositionally biased region" description="Low complexity" evidence="8">
    <location>
        <begin position="775"/>
        <end position="796"/>
    </location>
</feature>
<feature type="compositionally biased region" description="Pro residues" evidence="8">
    <location>
        <begin position="797"/>
        <end position="822"/>
    </location>
</feature>
<feature type="compositionally biased region" description="Pro residues" evidence="8">
    <location>
        <begin position="832"/>
        <end position="855"/>
    </location>
</feature>
<feature type="binding site" evidence="4">
    <location>
        <begin position="38"/>
        <end position="46"/>
    </location>
    <ligand>
        <name>GTP</name>
        <dbReference type="ChEBI" id="CHEBI:37565"/>
    </ligand>
</feature>
<feature type="binding site" evidence="4">
    <location>
        <begin position="205"/>
        <end position="211"/>
    </location>
    <ligand>
        <name>GTP</name>
        <dbReference type="ChEBI" id="CHEBI:37565"/>
    </ligand>
</feature>
<feature type="binding site" evidence="4">
    <location>
        <begin position="236"/>
        <end position="239"/>
    </location>
    <ligand>
        <name>GTP</name>
        <dbReference type="ChEBI" id="CHEBI:37565"/>
    </ligand>
</feature>
<feature type="modified residue" description="Phosphotyrosine" evidence="1">
    <location>
        <position position="231"/>
    </location>
</feature>
<feature type="modified residue" description="N6-acetyllysine" evidence="2">
    <location>
        <position position="299"/>
    </location>
</feature>
<feature type="modified residue" description="Phosphotyrosine" evidence="1">
    <location>
        <position position="603"/>
    </location>
</feature>
<feature type="modified residue" description="N6-acetyllysine" evidence="3">
    <location>
        <position position="604"/>
    </location>
</feature>
<feature type="modified residue" description="Phosphoserine" evidence="9 15">
    <location>
        <position position="769"/>
    </location>
</feature>
<feature type="modified residue" description="Phosphoserine" evidence="9 15">
    <location>
        <position position="773"/>
    </location>
</feature>
<feature type="modified residue" description="Phosphoserine" evidence="9">
    <location>
        <position position="853"/>
    </location>
</feature>
<feature type="splice variant" id="VSP_034038" description="In isoform 7, isoform 8, isoform 9, isoform 10, isoform 11 and isoform 12." evidence="13">
    <location>
        <begin position="516"/>
        <end position="525"/>
    </location>
</feature>
<feature type="splice variant" id="VSP_034039" description="In isoform 13." evidence="14">
    <original>VIRKGWLTVSNIGIMKGGSKGYWFVLTAESLSWYKDDEE</original>
    <variation>VRAKFCDSEGLADRQQHWHHERRLEGLLVCPHGRKLVLV</variation>
    <location>
        <begin position="526"/>
        <end position="564"/>
    </location>
</feature>
<feature type="splice variant" id="VSP_034040" description="In isoform 13." evidence="14">
    <location>
        <begin position="565"/>
        <end position="869"/>
    </location>
</feature>
<feature type="splice variant" id="VSP_034041" description="In isoform 3, isoform 4, isoform 9 and isoform 10." evidence="14">
    <original>SFTEN</original>
    <variation>SFGSNKTEM</variation>
    <location>
        <begin position="636"/>
        <end position="640"/>
    </location>
</feature>
<feature type="splice variant" id="VSP_034042" description="In isoform 5, isoform 6, isoform 11 and isoform 12." evidence="14">
    <original>SFTEN</original>
    <variation>DQAENEDGAQENTF</variation>
    <location>
        <begin position="636"/>
        <end position="640"/>
    </location>
</feature>
<feature type="splice variant" id="VSP_034043" description="In isoform 2, isoform 4, isoform 6, isoform 8, isoform 10 and isoform 12." evidence="13">
    <original>SRRPPPSPTRPTIIRPLESSLLD</original>
    <variation>RFGAVKEEAVEP</variation>
    <location>
        <begin position="847"/>
        <end position="869"/>
    </location>
</feature>
<dbReference type="EC" id="3.6.5.5"/>
<dbReference type="EMBL" id="D14076">
    <property type="protein sequence ID" value="BAA03161.1"/>
    <property type="molecule type" value="mRNA"/>
</dbReference>
<dbReference type="EMBL" id="AF201839">
    <property type="protein sequence ID" value="AAF07848.1"/>
    <property type="molecule type" value="mRNA"/>
</dbReference>
<dbReference type="PIR" id="I55498">
    <property type="entry name" value="I55498"/>
</dbReference>
<dbReference type="RefSeq" id="NP_612547.1">
    <molecule id="Q08877-1"/>
    <property type="nucleotide sequence ID" value="NM_138538.2"/>
</dbReference>
<dbReference type="RefSeq" id="XP_006250203.1">
    <molecule id="Q08877-7"/>
    <property type="nucleotide sequence ID" value="XM_006250141.5"/>
</dbReference>
<dbReference type="RefSeq" id="XP_006250204.1">
    <molecule id="Q08877-9"/>
    <property type="nucleotide sequence ID" value="XM_006250142.5"/>
</dbReference>
<dbReference type="RefSeq" id="XP_038946240.1">
    <molecule id="Q08877-8"/>
    <property type="nucleotide sequence ID" value="XM_039090312.2"/>
</dbReference>
<dbReference type="RefSeq" id="XP_038946241.1">
    <molecule id="Q08877-8"/>
    <property type="nucleotide sequence ID" value="XM_039090313.2"/>
</dbReference>
<dbReference type="RefSeq" id="XP_063128083.1">
    <molecule id="Q08877-2"/>
    <property type="nucleotide sequence ID" value="XM_063272013.1"/>
</dbReference>
<dbReference type="SMR" id="Q08877"/>
<dbReference type="BioGRID" id="251309">
    <property type="interactions" value="4"/>
</dbReference>
<dbReference type="ELM" id="Q08877"/>
<dbReference type="FunCoup" id="Q08877">
    <property type="interactions" value="2510"/>
</dbReference>
<dbReference type="IntAct" id="Q08877">
    <property type="interactions" value="3"/>
</dbReference>
<dbReference type="MINT" id="Q08877"/>
<dbReference type="STRING" id="10116.ENSRNOP00000063767"/>
<dbReference type="GlyGen" id="Q08877">
    <property type="glycosylation" value="2 sites"/>
</dbReference>
<dbReference type="iPTMnet" id="Q08877"/>
<dbReference type="PhosphoSitePlus" id="Q08877"/>
<dbReference type="jPOST" id="Q08877"/>
<dbReference type="PaxDb" id="10116-ENSRNOP00000063767"/>
<dbReference type="Ensembl" id="ENSRNOT00000067653.4">
    <molecule id="Q08877-1"/>
    <property type="protein sequence ID" value="ENSRNOP00000063767.1"/>
    <property type="gene ID" value="ENSRNOG00000026490.7"/>
</dbReference>
<dbReference type="Ensembl" id="ENSRNOT00000075938.2">
    <molecule id="Q08877-2"/>
    <property type="protein sequence ID" value="ENSRNOP00000068044.2"/>
    <property type="gene ID" value="ENSRNOG00000026490.7"/>
</dbReference>
<dbReference type="GeneID" id="171574"/>
<dbReference type="KEGG" id="rno:171574"/>
<dbReference type="UCSC" id="RGD:727949">
    <molecule id="Q08877-1"/>
    <property type="organism name" value="rat"/>
</dbReference>
<dbReference type="AGR" id="RGD:727949"/>
<dbReference type="CTD" id="26052"/>
<dbReference type="RGD" id="727949">
    <property type="gene designation" value="Dnm3"/>
</dbReference>
<dbReference type="eggNOG" id="KOG0446">
    <property type="taxonomic scope" value="Eukaryota"/>
</dbReference>
<dbReference type="GeneTree" id="ENSGT00940000158056"/>
<dbReference type="HOGENOM" id="CLU_008964_1_1_1"/>
<dbReference type="InParanoid" id="Q08877"/>
<dbReference type="OMA" id="XVLLLID"/>
<dbReference type="OrthoDB" id="5061070at2759"/>
<dbReference type="PhylomeDB" id="Q08877"/>
<dbReference type="BRENDA" id="3.6.5.5">
    <property type="organism ID" value="5301"/>
</dbReference>
<dbReference type="Reactome" id="R-RNO-166016">
    <property type="pathway name" value="Toll Like Receptor 4 (TLR4) Cascade"/>
</dbReference>
<dbReference type="Reactome" id="R-RNO-2132295">
    <property type="pathway name" value="MHC class II antigen presentation"/>
</dbReference>
<dbReference type="Reactome" id="R-RNO-437239">
    <property type="pathway name" value="Recycling pathway of L1"/>
</dbReference>
<dbReference type="Reactome" id="R-RNO-8856828">
    <property type="pathway name" value="Clathrin-mediated endocytosis"/>
</dbReference>
<dbReference type="PRO" id="PR:Q08877"/>
<dbReference type="Proteomes" id="UP000002494">
    <property type="component" value="Chromosome 13"/>
</dbReference>
<dbReference type="Bgee" id="ENSRNOG00000026490">
    <property type="expression patterns" value="Expressed in cerebellum and 16 other cell types or tissues"/>
</dbReference>
<dbReference type="GO" id="GO:0061828">
    <property type="term" value="C:apical tubulobulbar complex"/>
    <property type="evidence" value="ECO:0000314"/>
    <property type="project" value="RGD"/>
</dbReference>
<dbReference type="GO" id="GO:0030424">
    <property type="term" value="C:axon"/>
    <property type="evidence" value="ECO:0000314"/>
    <property type="project" value="RGD"/>
</dbReference>
<dbReference type="GO" id="GO:0061829">
    <property type="term" value="C:basal tubulobulbar complex"/>
    <property type="evidence" value="ECO:0000314"/>
    <property type="project" value="RGD"/>
</dbReference>
<dbReference type="GO" id="GO:0005737">
    <property type="term" value="C:cytoplasm"/>
    <property type="evidence" value="ECO:0000318"/>
    <property type="project" value="GO_Central"/>
</dbReference>
<dbReference type="GO" id="GO:0031410">
    <property type="term" value="C:cytoplasmic vesicle"/>
    <property type="evidence" value="ECO:0007669"/>
    <property type="project" value="UniProtKB-KW"/>
</dbReference>
<dbReference type="GO" id="GO:0005829">
    <property type="term" value="C:cytosol"/>
    <property type="evidence" value="ECO:0000303"/>
    <property type="project" value="UniProtKB"/>
</dbReference>
<dbReference type="GO" id="GO:0043197">
    <property type="term" value="C:dendritic spine"/>
    <property type="evidence" value="ECO:0000314"/>
    <property type="project" value="UniProtKB"/>
</dbReference>
<dbReference type="GO" id="GO:0044327">
    <property type="term" value="C:dendritic spine head"/>
    <property type="evidence" value="ECO:0000314"/>
    <property type="project" value="RGD"/>
</dbReference>
<dbReference type="GO" id="GO:0098978">
    <property type="term" value="C:glutamatergic synapse"/>
    <property type="evidence" value="ECO:0000314"/>
    <property type="project" value="SynGO"/>
</dbReference>
<dbReference type="GO" id="GO:0005794">
    <property type="term" value="C:Golgi apparatus"/>
    <property type="evidence" value="ECO:0007669"/>
    <property type="project" value="UniProtKB-SubCell"/>
</dbReference>
<dbReference type="GO" id="GO:0005874">
    <property type="term" value="C:microtubule"/>
    <property type="evidence" value="ECO:0000318"/>
    <property type="project" value="GO_Central"/>
</dbReference>
<dbReference type="GO" id="GO:0048471">
    <property type="term" value="C:perinuclear region of cytoplasm"/>
    <property type="evidence" value="ECO:0000314"/>
    <property type="project" value="UniProtKB"/>
</dbReference>
<dbReference type="GO" id="GO:0001917">
    <property type="term" value="C:photoreceptor inner segment"/>
    <property type="evidence" value="ECO:0000266"/>
    <property type="project" value="RGD"/>
</dbReference>
<dbReference type="GO" id="GO:0005886">
    <property type="term" value="C:plasma membrane"/>
    <property type="evidence" value="ECO:0000318"/>
    <property type="project" value="GO_Central"/>
</dbReference>
<dbReference type="GO" id="GO:0014069">
    <property type="term" value="C:postsynaptic density"/>
    <property type="evidence" value="ECO:0000314"/>
    <property type="project" value="UniProtKB"/>
</dbReference>
<dbReference type="GO" id="GO:0098844">
    <property type="term" value="C:postsynaptic endocytic zone membrane"/>
    <property type="evidence" value="ECO:0000314"/>
    <property type="project" value="SynGO"/>
</dbReference>
<dbReference type="GO" id="GO:0098793">
    <property type="term" value="C:presynapse"/>
    <property type="evidence" value="ECO:0000266"/>
    <property type="project" value="RGD"/>
</dbReference>
<dbReference type="GO" id="GO:0045202">
    <property type="term" value="C:synapse"/>
    <property type="evidence" value="ECO:0000318"/>
    <property type="project" value="GO_Central"/>
</dbReference>
<dbReference type="GO" id="GO:0043083">
    <property type="term" value="C:synaptic cleft"/>
    <property type="evidence" value="ECO:0000314"/>
    <property type="project" value="RGD"/>
</dbReference>
<dbReference type="GO" id="GO:0005525">
    <property type="term" value="F:GTP binding"/>
    <property type="evidence" value="ECO:0007669"/>
    <property type="project" value="UniProtKB-KW"/>
</dbReference>
<dbReference type="GO" id="GO:0003924">
    <property type="term" value="F:GTPase activity"/>
    <property type="evidence" value="ECO:0000315"/>
    <property type="project" value="UniProtKB"/>
</dbReference>
<dbReference type="GO" id="GO:0008017">
    <property type="term" value="F:microtubule binding"/>
    <property type="evidence" value="ECO:0000318"/>
    <property type="project" value="GO_Central"/>
</dbReference>
<dbReference type="GO" id="GO:0050998">
    <property type="term" value="F:nitric-oxide synthase binding"/>
    <property type="evidence" value="ECO:0000314"/>
    <property type="project" value="RGD"/>
</dbReference>
<dbReference type="GO" id="GO:0120283">
    <property type="term" value="F:protein serine/threonine kinase binding"/>
    <property type="evidence" value="ECO:0000353"/>
    <property type="project" value="RGD"/>
</dbReference>
<dbReference type="GO" id="GO:0099186">
    <property type="term" value="F:structural constituent of postsynapse"/>
    <property type="evidence" value="ECO:0000314"/>
    <property type="project" value="SynGO"/>
</dbReference>
<dbReference type="GO" id="GO:0031798">
    <property type="term" value="F:type 1 metabotropic glutamate receptor binding"/>
    <property type="evidence" value="ECO:0000353"/>
    <property type="project" value="RGD"/>
</dbReference>
<dbReference type="GO" id="GO:0031802">
    <property type="term" value="F:type 5 metabotropic glutamate receptor binding"/>
    <property type="evidence" value="ECO:0000353"/>
    <property type="project" value="RGD"/>
</dbReference>
<dbReference type="GO" id="GO:0006897">
    <property type="term" value="P:endocytosis"/>
    <property type="evidence" value="ECO:0000315"/>
    <property type="project" value="UniProtKB"/>
</dbReference>
<dbReference type="GO" id="GO:0046847">
    <property type="term" value="P:filopodium assembly"/>
    <property type="evidence" value="ECO:0000314"/>
    <property type="project" value="UniProtKB"/>
</dbReference>
<dbReference type="GO" id="GO:0061002">
    <property type="term" value="P:negative regulation of dendritic spine morphogenesis"/>
    <property type="evidence" value="ECO:0000314"/>
    <property type="project" value="RGD"/>
</dbReference>
<dbReference type="GO" id="GO:0051491">
    <property type="term" value="P:positive regulation of filopodium assembly"/>
    <property type="evidence" value="ECO:0000314"/>
    <property type="project" value="RGD"/>
</dbReference>
<dbReference type="GO" id="GO:1903423">
    <property type="term" value="P:positive regulation of synaptic vesicle recycling"/>
    <property type="evidence" value="ECO:0000315"/>
    <property type="project" value="RGD"/>
</dbReference>
<dbReference type="GO" id="GO:0031623">
    <property type="term" value="P:receptor internalization"/>
    <property type="evidence" value="ECO:0000318"/>
    <property type="project" value="GO_Central"/>
</dbReference>
<dbReference type="GO" id="GO:0061001">
    <property type="term" value="P:regulation of dendritic spine morphogenesis"/>
    <property type="evidence" value="ECO:0000315"/>
    <property type="project" value="RGD"/>
</dbReference>
<dbReference type="GO" id="GO:0042713">
    <property type="term" value="P:sperm ejaculation"/>
    <property type="evidence" value="ECO:0000303"/>
    <property type="project" value="UniProtKB"/>
</dbReference>
<dbReference type="GO" id="GO:0007416">
    <property type="term" value="P:synapse assembly"/>
    <property type="evidence" value="ECO:0000314"/>
    <property type="project" value="UniProtKB"/>
</dbReference>
<dbReference type="GO" id="GO:0016185">
    <property type="term" value="P:synaptic vesicle budding from presynaptic endocytic zone membrane"/>
    <property type="evidence" value="ECO:0000318"/>
    <property type="project" value="GO_Central"/>
</dbReference>
<dbReference type="GO" id="GO:0048488">
    <property type="term" value="P:synaptic vesicle endocytosis"/>
    <property type="evidence" value="ECO:0000266"/>
    <property type="project" value="RGD"/>
</dbReference>
<dbReference type="CDD" id="cd08771">
    <property type="entry name" value="DLP_1"/>
    <property type="match status" value="1"/>
</dbReference>
<dbReference type="CDD" id="cd01256">
    <property type="entry name" value="PH_dynamin"/>
    <property type="match status" value="1"/>
</dbReference>
<dbReference type="FunFam" id="1.20.120.1240:FF:000019">
    <property type="entry name" value="Dynamin 2"/>
    <property type="match status" value="1"/>
</dbReference>
<dbReference type="FunFam" id="1.20.120.1240:FF:000014">
    <property type="entry name" value="Dynamin 2b"/>
    <property type="match status" value="1"/>
</dbReference>
<dbReference type="FunFam" id="3.40.50.300:FF:000045">
    <property type="entry name" value="dynamin-1 isoform X2"/>
    <property type="match status" value="1"/>
</dbReference>
<dbReference type="FunFam" id="2.30.29.30:FF:000341">
    <property type="entry name" value="dynamin-3 isoform X1"/>
    <property type="match status" value="1"/>
</dbReference>
<dbReference type="Gene3D" id="1.20.120.1240">
    <property type="entry name" value="Dynamin, middle domain"/>
    <property type="match status" value="2"/>
</dbReference>
<dbReference type="Gene3D" id="3.40.50.300">
    <property type="entry name" value="P-loop containing nucleotide triphosphate hydrolases"/>
    <property type="match status" value="1"/>
</dbReference>
<dbReference type="Gene3D" id="2.30.29.30">
    <property type="entry name" value="Pleckstrin-homology domain (PH domain)/Phosphotyrosine-binding domain (PTB)"/>
    <property type="match status" value="1"/>
</dbReference>
<dbReference type="InterPro" id="IPR022812">
    <property type="entry name" value="Dynamin"/>
</dbReference>
<dbReference type="InterPro" id="IPR001401">
    <property type="entry name" value="Dynamin_GTPase"/>
</dbReference>
<dbReference type="InterPro" id="IPR019762">
    <property type="entry name" value="Dynamin_GTPase_CS"/>
</dbReference>
<dbReference type="InterPro" id="IPR045063">
    <property type="entry name" value="Dynamin_N"/>
</dbReference>
<dbReference type="InterPro" id="IPR000375">
    <property type="entry name" value="Dynamin_stalk"/>
</dbReference>
<dbReference type="InterPro" id="IPR030381">
    <property type="entry name" value="G_DYNAMIN_dom"/>
</dbReference>
<dbReference type="InterPro" id="IPR003130">
    <property type="entry name" value="GED"/>
</dbReference>
<dbReference type="InterPro" id="IPR020850">
    <property type="entry name" value="GED_dom"/>
</dbReference>
<dbReference type="InterPro" id="IPR027417">
    <property type="entry name" value="P-loop_NTPase"/>
</dbReference>
<dbReference type="InterPro" id="IPR011993">
    <property type="entry name" value="PH-like_dom_sf"/>
</dbReference>
<dbReference type="InterPro" id="IPR001849">
    <property type="entry name" value="PH_domain"/>
</dbReference>
<dbReference type="PANTHER" id="PTHR11566">
    <property type="entry name" value="DYNAMIN"/>
    <property type="match status" value="1"/>
</dbReference>
<dbReference type="PANTHER" id="PTHR11566:SF54">
    <property type="entry name" value="DYNAMIN-3"/>
    <property type="match status" value="1"/>
</dbReference>
<dbReference type="Pfam" id="PF01031">
    <property type="entry name" value="Dynamin_M"/>
    <property type="match status" value="1"/>
</dbReference>
<dbReference type="Pfam" id="PF00350">
    <property type="entry name" value="Dynamin_N"/>
    <property type="match status" value="1"/>
</dbReference>
<dbReference type="Pfam" id="PF02212">
    <property type="entry name" value="GED"/>
    <property type="match status" value="1"/>
</dbReference>
<dbReference type="Pfam" id="PF00169">
    <property type="entry name" value="PH"/>
    <property type="match status" value="1"/>
</dbReference>
<dbReference type="PRINTS" id="PR00195">
    <property type="entry name" value="DYNAMIN"/>
</dbReference>
<dbReference type="SMART" id="SM00053">
    <property type="entry name" value="DYNc"/>
    <property type="match status" value="1"/>
</dbReference>
<dbReference type="SMART" id="SM00302">
    <property type="entry name" value="GED"/>
    <property type="match status" value="1"/>
</dbReference>
<dbReference type="SMART" id="SM00233">
    <property type="entry name" value="PH"/>
    <property type="match status" value="1"/>
</dbReference>
<dbReference type="SUPFAM" id="SSF52540">
    <property type="entry name" value="P-loop containing nucleoside triphosphate hydrolases"/>
    <property type="match status" value="1"/>
</dbReference>
<dbReference type="SUPFAM" id="SSF50729">
    <property type="entry name" value="PH domain-like"/>
    <property type="match status" value="1"/>
</dbReference>
<dbReference type="PROSITE" id="PS00410">
    <property type="entry name" value="G_DYNAMIN_1"/>
    <property type="match status" value="1"/>
</dbReference>
<dbReference type="PROSITE" id="PS51718">
    <property type="entry name" value="G_DYNAMIN_2"/>
    <property type="match status" value="1"/>
</dbReference>
<dbReference type="PROSITE" id="PS51388">
    <property type="entry name" value="GED"/>
    <property type="match status" value="1"/>
</dbReference>
<dbReference type="PROSITE" id="PS50003">
    <property type="entry name" value="PH_DOMAIN"/>
    <property type="match status" value="1"/>
</dbReference>